<gene>
    <name evidence="7" type="primary">aba1</name>
</gene>
<proteinExistence type="evidence at transcript level"/>
<reference key="1">
    <citation type="journal article" date="2004" name="Appl. Environ. Microbiol.">
        <title>The P450 monooxygenase BcABA1 is essential for abscisic acid biosynthesis in Botrytis cinerea.</title>
        <authorList>
            <person name="Siewers V."/>
            <person name="Smedsgaard J."/>
            <person name="Tudzynski P."/>
        </authorList>
    </citation>
    <scope>NUCLEOTIDE SEQUENCE [GENOMIC DNA]</scope>
    <scope>INDUCTION</scope>
    <scope>FUNCTION</scope>
    <scope>DISRUPTION PHENOTYPE</scope>
    <scope>PATHWAY</scope>
    <source>
        <strain>SAS56</strain>
    </source>
</reference>
<reference key="2">
    <citation type="journal article" date="2006" name="Appl. Environ. Microbiol.">
        <title>Identification of an abscisic acid gene cluster in the grey mold Botrytis cinerea.</title>
        <authorList>
            <person name="Siewers V."/>
            <person name="Kokkelink L."/>
            <person name="Smedsgaard J."/>
            <person name="Tudzynski P."/>
        </authorList>
    </citation>
    <scope>INDUCTION</scope>
    <scope>FUNCTION</scope>
</reference>
<reference key="3">
    <citation type="journal article" date="2018" name="J. Am. Chem. Soc.">
        <title>Unveiling biosynthesis of the phytohormone abscisic acid in fungi: unprecedented mechanism of core scaffold formation catalyzed by an unusual sesquiterpene synthase.</title>
        <authorList>
            <person name="Takino J."/>
            <person name="Kozaki T."/>
            <person name="Sato Y."/>
            <person name="Liu C."/>
            <person name="Ozaki T."/>
            <person name="Minami A."/>
            <person name="Oikawa H."/>
        </authorList>
    </citation>
    <scope>FUNCTION</scope>
</reference>
<sequence>MSNSILNLGSFACLLSLGSIVLWYTISAVLAWYPLRKIPAPSFLATFSYLWLAKTTYSGKQYWIQRDLHKKYGPLVRIGPTDIITDDPEIIKKISSARSSHRRGDWYLTGRFNPYYDNMFTMLEPGPHAKAKARTAAAYSGRDMPDLEVGVNAQLQTLIGLMRSKYASNTVKPHQPLLDLGQVSCFFTMDVITRLAFGEEFGYLKEETDQYGFLGEVRELWPRMSTSADTPWIRKFLFSPPFLKVLGPKPTDKTGFGALMAVAEHHVGKRFAPDAKKKEDMLGSFIRHGLNQQECEVEGLFMIVAGTESTASAIRSTLVHVMTCPRVYQKLKTEINLAVEEGKVSSPIKLEEAKLLPFLQAVIYEGIRMRPPLLGLFPKIVPDGGEEFHGMFIPAGTAICMNTSSLLRSTALFGDDAEVYRPERFMELEKSKRGEMERNVELAFGYGQYMCVGKTVAFMELNKSIFEILRAFDLQLLSPAKPCDVLSYGIFLESNMLVKVTESEGTEYK</sequence>
<accession>Q6H9H9</accession>
<organism>
    <name type="scientific">Botryotinia fuckeliana</name>
    <name type="common">Noble rot fungus</name>
    <name type="synonym">Botrytis cinerea</name>
    <dbReference type="NCBI Taxonomy" id="40559"/>
    <lineage>
        <taxon>Eukaryota</taxon>
        <taxon>Fungi</taxon>
        <taxon>Dikarya</taxon>
        <taxon>Ascomycota</taxon>
        <taxon>Pezizomycotina</taxon>
        <taxon>Leotiomycetes</taxon>
        <taxon>Helotiales</taxon>
        <taxon>Sclerotiniaceae</taxon>
        <taxon>Botrytis</taxon>
    </lineage>
</organism>
<feature type="signal peptide" evidence="2">
    <location>
        <begin position="1"/>
        <end position="31"/>
    </location>
</feature>
<feature type="chain" id="PRO_0000448410" description="Cytochrome P450 monooxygenase aba1">
    <location>
        <begin position="32"/>
        <end position="509"/>
    </location>
</feature>
<feature type="binding site" description="axial binding residue" evidence="1">
    <location>
        <position position="451"/>
    </location>
    <ligand>
        <name>heme</name>
        <dbReference type="ChEBI" id="CHEBI:30413"/>
    </ligand>
    <ligandPart>
        <name>Fe</name>
        <dbReference type="ChEBI" id="CHEBI:18248"/>
    </ligandPart>
</feature>
<feature type="glycosylation site" description="N-linked (GlcNAc...) asparagine" evidence="3">
    <location>
        <position position="402"/>
    </location>
</feature>
<feature type="glycosylation site" description="N-linked (GlcNAc...) asparagine" evidence="3">
    <location>
        <position position="462"/>
    </location>
</feature>
<comment type="function">
    <text evidence="4 5 6 11">Cytochrome P450 monooxygenase; part of the gene cluster that mediates the biosynthesis of abscisic acid (ABA), a phytohormone that acts antagonistically toward salicylic acid (SA), jasmonic acid (JA) and ethylene (ETH) signaling, to impede plant defense responses (PubMed:15240257, PubMed:16820452). The first step of the pathway catalyzes the reaction from farnesyl diphosphate to alpha-ionylideneethane performed by the alpha-ionylideneethane synthase aba3 via a three-step reaction mechanism involving 2 neutral intermediates, beta-farnesene and allofarnesene (PubMed:30226766). The cytochrome P450 monooxygenase aba1 might then be involved in the conversion of alpha-ionylideneethane to alpha-ionylideneacetic acid (Probable). Alpha-ionylideneacetic acid is further converted to abscisic acid in 2 steps involving the cytochrome P450 monooxygenase aba2 and the short-chain dehydrogenase/reductase aba4, via the intermediates 1'-deoxy-ABA or 1',4'-trans-diol-ABA, depending on the order of action of these 2 enzymes (Probable). Aba2 is responsible for the hydroxylation of carbon atom C-1' and aba4 might be involved in the oxidation of the C-4' carbon atom (PubMed:16820452).</text>
</comment>
<comment type="cofactor">
    <cofactor evidence="1">
        <name>heme</name>
        <dbReference type="ChEBI" id="CHEBI:30413"/>
    </cofactor>
</comment>
<comment type="pathway">
    <text evidence="4">Hormone biosynthesis.</text>
</comment>
<comment type="induction">
    <text evidence="5">Expression is persistently induced 90 minutes after the addition of the ABA precursor mevalonic acid (MVA) to the medium.</text>
</comment>
<comment type="disruption phenotype">
    <text evidence="4">Impairs the production of abscisic acid (ABA).</text>
</comment>
<comment type="similarity">
    <text evidence="9">Belongs to the cytochrome P450 family.</text>
</comment>
<keyword id="KW-0325">Glycoprotein</keyword>
<keyword id="KW-0349">Heme</keyword>
<keyword id="KW-0408">Iron</keyword>
<keyword id="KW-0479">Metal-binding</keyword>
<keyword id="KW-0503">Monooxygenase</keyword>
<keyword id="KW-0560">Oxidoreductase</keyword>
<keyword id="KW-0732">Signal</keyword>
<keyword id="KW-0843">Virulence</keyword>
<name>ABA1_BOTFU</name>
<dbReference type="EC" id="1.-.-.-" evidence="10"/>
<dbReference type="EMBL" id="AJ609392">
    <property type="protein sequence ID" value="CAE76652.2"/>
    <property type="molecule type" value="Genomic_DNA"/>
</dbReference>
<dbReference type="SMR" id="Q6H9H9"/>
<dbReference type="GlyCosmos" id="Q6H9H9">
    <property type="glycosylation" value="2 sites, No reported glycans"/>
</dbReference>
<dbReference type="GO" id="GO:0020037">
    <property type="term" value="F:heme binding"/>
    <property type="evidence" value="ECO:0007669"/>
    <property type="project" value="InterPro"/>
</dbReference>
<dbReference type="GO" id="GO:0005506">
    <property type="term" value="F:iron ion binding"/>
    <property type="evidence" value="ECO:0007669"/>
    <property type="project" value="InterPro"/>
</dbReference>
<dbReference type="GO" id="GO:0004497">
    <property type="term" value="F:monooxygenase activity"/>
    <property type="evidence" value="ECO:0007669"/>
    <property type="project" value="UniProtKB-KW"/>
</dbReference>
<dbReference type="GO" id="GO:0016705">
    <property type="term" value="F:oxidoreductase activity, acting on paired donors, with incorporation or reduction of molecular oxygen"/>
    <property type="evidence" value="ECO:0007669"/>
    <property type="project" value="InterPro"/>
</dbReference>
<dbReference type="GO" id="GO:0009688">
    <property type="term" value="P:abscisic acid biosynthetic process"/>
    <property type="evidence" value="ECO:0000315"/>
    <property type="project" value="GO_Central"/>
</dbReference>
<dbReference type="CDD" id="cd11060">
    <property type="entry name" value="CYP57A1-like"/>
    <property type="match status" value="1"/>
</dbReference>
<dbReference type="Gene3D" id="1.10.630.10">
    <property type="entry name" value="Cytochrome P450"/>
    <property type="match status" value="1"/>
</dbReference>
<dbReference type="InterPro" id="IPR001128">
    <property type="entry name" value="Cyt_P450"/>
</dbReference>
<dbReference type="InterPro" id="IPR002401">
    <property type="entry name" value="Cyt_P450_E_grp-I"/>
</dbReference>
<dbReference type="InterPro" id="IPR036396">
    <property type="entry name" value="Cyt_P450_sf"/>
</dbReference>
<dbReference type="InterPro" id="IPR050121">
    <property type="entry name" value="Cytochrome_P450_monoxygenase"/>
</dbReference>
<dbReference type="PANTHER" id="PTHR24305">
    <property type="entry name" value="CYTOCHROME P450"/>
    <property type="match status" value="1"/>
</dbReference>
<dbReference type="PANTHER" id="PTHR24305:SF77">
    <property type="entry name" value="CYTOCHROME P450 MONOOXYGENASE"/>
    <property type="match status" value="1"/>
</dbReference>
<dbReference type="Pfam" id="PF00067">
    <property type="entry name" value="p450"/>
    <property type="match status" value="1"/>
</dbReference>
<dbReference type="PRINTS" id="PR00463">
    <property type="entry name" value="EP450I"/>
</dbReference>
<dbReference type="PRINTS" id="PR00385">
    <property type="entry name" value="P450"/>
</dbReference>
<dbReference type="SUPFAM" id="SSF48264">
    <property type="entry name" value="Cytochrome P450"/>
    <property type="match status" value="1"/>
</dbReference>
<evidence type="ECO:0000250" key="1">
    <source>
        <dbReference type="UniProtKB" id="P04798"/>
    </source>
</evidence>
<evidence type="ECO:0000255" key="2"/>
<evidence type="ECO:0000255" key="3">
    <source>
        <dbReference type="PROSITE-ProRule" id="PRU00498"/>
    </source>
</evidence>
<evidence type="ECO:0000269" key="4">
    <source>
    </source>
</evidence>
<evidence type="ECO:0000269" key="5">
    <source>
    </source>
</evidence>
<evidence type="ECO:0000269" key="6">
    <source>
    </source>
</evidence>
<evidence type="ECO:0000303" key="7">
    <source>
    </source>
</evidence>
<evidence type="ECO:0000303" key="8">
    <source>
    </source>
</evidence>
<evidence type="ECO:0000305" key="9"/>
<evidence type="ECO:0000305" key="10">
    <source>
    </source>
</evidence>
<evidence type="ECO:0000305" key="11">
    <source>
    </source>
</evidence>
<protein>
    <recommendedName>
        <fullName evidence="8">Cytochrome P450 monooxygenase aba1</fullName>
        <ecNumber evidence="10">1.-.-.-</ecNumber>
    </recommendedName>
    <alternativeName>
        <fullName evidence="8">Abscisic acid biosynthesis cluster protein 2</fullName>
    </alternativeName>
</protein>